<reference key="1">
    <citation type="journal article" date="2008" name="J. Bacteriol.">
        <title>Complete genome sequence of Leuconostoc citreum KM20.</title>
        <authorList>
            <person name="Kim J.F."/>
            <person name="Jeong H."/>
            <person name="Lee J.-S."/>
            <person name="Choi S.-H."/>
            <person name="Ha M."/>
            <person name="Hur C.-G."/>
            <person name="Kim J.-S."/>
            <person name="Lee S."/>
            <person name="Park H.-S."/>
            <person name="Park Y.-H."/>
            <person name="Oh T.K."/>
        </authorList>
    </citation>
    <scope>NUCLEOTIDE SEQUENCE [LARGE SCALE GENOMIC DNA]</scope>
    <source>
        <strain>KM20</strain>
    </source>
</reference>
<protein>
    <recommendedName>
        <fullName evidence="1">Acetylglutamate kinase</fullName>
        <ecNumber evidence="1">2.7.2.8</ecNumber>
    </recommendedName>
    <alternativeName>
        <fullName evidence="1">N-acetyl-L-glutamate 5-phosphotransferase</fullName>
    </alternativeName>
    <alternativeName>
        <fullName evidence="1">NAG kinase</fullName>
        <shortName evidence="1">NAGK</shortName>
    </alternativeName>
</protein>
<proteinExistence type="inferred from homology"/>
<name>ARGB_LEUCK</name>
<keyword id="KW-0028">Amino-acid biosynthesis</keyword>
<keyword id="KW-0055">Arginine biosynthesis</keyword>
<keyword id="KW-0067">ATP-binding</keyword>
<keyword id="KW-0963">Cytoplasm</keyword>
<keyword id="KW-0418">Kinase</keyword>
<keyword id="KW-0547">Nucleotide-binding</keyword>
<keyword id="KW-1185">Reference proteome</keyword>
<keyword id="KW-0808">Transferase</keyword>
<dbReference type="EC" id="2.7.2.8" evidence="1"/>
<dbReference type="EMBL" id="DQ489736">
    <property type="protein sequence ID" value="ACA83496.1"/>
    <property type="molecule type" value="Genomic_DNA"/>
</dbReference>
<dbReference type="RefSeq" id="WP_004902157.1">
    <property type="nucleotide sequence ID" value="NC_010471.1"/>
</dbReference>
<dbReference type="SMR" id="B1MWD1"/>
<dbReference type="STRING" id="349519.LCK_01673"/>
<dbReference type="GeneID" id="61103142"/>
<dbReference type="KEGG" id="lci:LCK_01673"/>
<dbReference type="eggNOG" id="COG0548">
    <property type="taxonomic scope" value="Bacteria"/>
</dbReference>
<dbReference type="HOGENOM" id="CLU_053680_1_0_9"/>
<dbReference type="OrthoDB" id="9803155at2"/>
<dbReference type="UniPathway" id="UPA00068">
    <property type="reaction ID" value="UER00107"/>
</dbReference>
<dbReference type="Proteomes" id="UP000002166">
    <property type="component" value="Chromosome"/>
</dbReference>
<dbReference type="GO" id="GO:0005737">
    <property type="term" value="C:cytoplasm"/>
    <property type="evidence" value="ECO:0007669"/>
    <property type="project" value="UniProtKB-SubCell"/>
</dbReference>
<dbReference type="GO" id="GO:0003991">
    <property type="term" value="F:acetylglutamate kinase activity"/>
    <property type="evidence" value="ECO:0007669"/>
    <property type="project" value="UniProtKB-UniRule"/>
</dbReference>
<dbReference type="GO" id="GO:0005524">
    <property type="term" value="F:ATP binding"/>
    <property type="evidence" value="ECO:0007669"/>
    <property type="project" value="UniProtKB-UniRule"/>
</dbReference>
<dbReference type="GO" id="GO:0042450">
    <property type="term" value="P:arginine biosynthetic process via ornithine"/>
    <property type="evidence" value="ECO:0007669"/>
    <property type="project" value="UniProtKB-UniRule"/>
</dbReference>
<dbReference type="GO" id="GO:0006526">
    <property type="term" value="P:L-arginine biosynthetic process"/>
    <property type="evidence" value="ECO:0007669"/>
    <property type="project" value="UniProtKB-UniPathway"/>
</dbReference>
<dbReference type="CDD" id="cd04238">
    <property type="entry name" value="AAK_NAGK-like"/>
    <property type="match status" value="1"/>
</dbReference>
<dbReference type="Gene3D" id="3.40.1160.10">
    <property type="entry name" value="Acetylglutamate kinase-like"/>
    <property type="match status" value="1"/>
</dbReference>
<dbReference type="HAMAP" id="MF_00082">
    <property type="entry name" value="ArgB"/>
    <property type="match status" value="1"/>
</dbReference>
<dbReference type="InterPro" id="IPR036393">
    <property type="entry name" value="AceGlu_kinase-like_sf"/>
</dbReference>
<dbReference type="InterPro" id="IPR004662">
    <property type="entry name" value="AcgluKinase_fam"/>
</dbReference>
<dbReference type="InterPro" id="IPR037528">
    <property type="entry name" value="ArgB"/>
</dbReference>
<dbReference type="InterPro" id="IPR001048">
    <property type="entry name" value="Asp/Glu/Uridylate_kinase"/>
</dbReference>
<dbReference type="NCBIfam" id="TIGR00761">
    <property type="entry name" value="argB"/>
    <property type="match status" value="1"/>
</dbReference>
<dbReference type="PANTHER" id="PTHR23342">
    <property type="entry name" value="N-ACETYLGLUTAMATE SYNTHASE"/>
    <property type="match status" value="1"/>
</dbReference>
<dbReference type="PANTHER" id="PTHR23342:SF0">
    <property type="entry name" value="N-ACETYLGLUTAMATE SYNTHASE, MITOCHONDRIAL"/>
    <property type="match status" value="1"/>
</dbReference>
<dbReference type="Pfam" id="PF00696">
    <property type="entry name" value="AA_kinase"/>
    <property type="match status" value="1"/>
</dbReference>
<dbReference type="PIRSF" id="PIRSF000728">
    <property type="entry name" value="NAGK"/>
    <property type="match status" value="1"/>
</dbReference>
<dbReference type="SUPFAM" id="SSF53633">
    <property type="entry name" value="Carbamate kinase-like"/>
    <property type="match status" value="1"/>
</dbReference>
<gene>
    <name evidence="1" type="primary">argB</name>
    <name type="ordered locus">LCK_01673</name>
</gene>
<feature type="chain" id="PRO_1000117126" description="Acetylglutamate kinase">
    <location>
        <begin position="1"/>
        <end position="245"/>
    </location>
</feature>
<feature type="binding site" evidence="1">
    <location>
        <begin position="41"/>
        <end position="42"/>
    </location>
    <ligand>
        <name>substrate</name>
    </ligand>
</feature>
<feature type="binding site" evidence="1">
    <location>
        <position position="63"/>
    </location>
    <ligand>
        <name>substrate</name>
    </ligand>
</feature>
<feature type="binding site" evidence="1">
    <location>
        <position position="156"/>
    </location>
    <ligand>
        <name>substrate</name>
    </ligand>
</feature>
<feature type="site" description="Transition state stabilizer" evidence="1">
    <location>
        <position position="8"/>
    </location>
</feature>
<feature type="site" description="Transition state stabilizer" evidence="1">
    <location>
        <position position="215"/>
    </location>
</feature>
<organism>
    <name type="scientific">Leuconostoc citreum (strain KM20)</name>
    <dbReference type="NCBI Taxonomy" id="349519"/>
    <lineage>
        <taxon>Bacteria</taxon>
        <taxon>Bacillati</taxon>
        <taxon>Bacillota</taxon>
        <taxon>Bacilli</taxon>
        <taxon>Lactobacillales</taxon>
        <taxon>Lactobacillaceae</taxon>
        <taxon>Leuconostoc</taxon>
    </lineage>
</organism>
<accession>B1MWD1</accession>
<comment type="function">
    <text evidence="1">Catalyzes the ATP-dependent phosphorylation of N-acetyl-L-glutamate.</text>
</comment>
<comment type="catalytic activity">
    <reaction evidence="1">
        <text>N-acetyl-L-glutamate + ATP = N-acetyl-L-glutamyl 5-phosphate + ADP</text>
        <dbReference type="Rhea" id="RHEA:14629"/>
        <dbReference type="ChEBI" id="CHEBI:30616"/>
        <dbReference type="ChEBI" id="CHEBI:44337"/>
        <dbReference type="ChEBI" id="CHEBI:57936"/>
        <dbReference type="ChEBI" id="CHEBI:456216"/>
        <dbReference type="EC" id="2.7.2.8"/>
    </reaction>
</comment>
<comment type="pathway">
    <text evidence="1">Amino-acid biosynthesis; L-arginine biosynthesis; N(2)-acetyl-L-ornithine from L-glutamate: step 2/4.</text>
</comment>
<comment type="subcellular location">
    <subcellularLocation>
        <location evidence="1">Cytoplasm</location>
    </subcellularLocation>
</comment>
<comment type="similarity">
    <text evidence="1">Belongs to the acetylglutamate kinase family. ArgB subfamily.</text>
</comment>
<sequence>MTKKIIIKIGGSAAEQLTPAFFDTIKYWQTQDTQIAIVHGGGDRISQLMSQLHEPIEKINGIRLTTQTGINITKMALLGQVQPALIEACRQQGIATIGLNAGSNQLLTGHLLDSDTYGYVGAIHQVNTQLIHQLWQQKLIPIIAPLAITNDGQWLNVNADHAATAIAKYLKADELYLLTDVSGVAVSGNILQELTPGKAKQLQDDHIITGGMIPKINSALHAVKRGVHNVHITDTVTHPGTIVTL</sequence>
<evidence type="ECO:0000255" key="1">
    <source>
        <dbReference type="HAMAP-Rule" id="MF_00082"/>
    </source>
</evidence>